<dbReference type="EC" id="1.14.14.104" evidence="3 4"/>
<dbReference type="EMBL" id="KY926696">
    <property type="protein sequence ID" value="ASG81458.1"/>
    <property type="molecule type" value="mRNA"/>
</dbReference>
<dbReference type="SMR" id="A0A218NGS0"/>
<dbReference type="KEGG" id="ag:ASG81458"/>
<dbReference type="BioCyc" id="MetaCyc:MONOMER-17775"/>
<dbReference type="BRENDA" id="1.14.13.75">
    <property type="organism ID" value="5309"/>
</dbReference>
<dbReference type="BRENDA" id="1.14.14.104">
    <property type="organism ID" value="5309"/>
</dbReference>
<dbReference type="UniPathway" id="UPA00310"/>
<dbReference type="GO" id="GO:0016020">
    <property type="term" value="C:membrane"/>
    <property type="evidence" value="ECO:0007669"/>
    <property type="project" value="UniProtKB-SubCell"/>
</dbReference>
<dbReference type="GO" id="GO:0020037">
    <property type="term" value="F:heme binding"/>
    <property type="evidence" value="ECO:0007669"/>
    <property type="project" value="InterPro"/>
</dbReference>
<dbReference type="GO" id="GO:0005506">
    <property type="term" value="F:iron ion binding"/>
    <property type="evidence" value="ECO:0007669"/>
    <property type="project" value="InterPro"/>
</dbReference>
<dbReference type="GO" id="GO:0016853">
    <property type="term" value="F:isomerase activity"/>
    <property type="evidence" value="ECO:0000314"/>
    <property type="project" value="UniProtKB"/>
</dbReference>
<dbReference type="GO" id="GO:0004497">
    <property type="term" value="F:monooxygenase activity"/>
    <property type="evidence" value="ECO:0000314"/>
    <property type="project" value="UniProtKB"/>
</dbReference>
<dbReference type="GO" id="GO:0050596">
    <property type="term" value="F:vinorine hydroxylase activity"/>
    <property type="evidence" value="ECO:0000314"/>
    <property type="project" value="UniProtKB"/>
</dbReference>
<dbReference type="GO" id="GO:0035835">
    <property type="term" value="P:indole alkaloid biosynthetic process"/>
    <property type="evidence" value="ECO:0000314"/>
    <property type="project" value="UniProtKB"/>
</dbReference>
<dbReference type="Gene3D" id="1.10.630.10">
    <property type="entry name" value="Cytochrome P450"/>
    <property type="match status" value="2"/>
</dbReference>
<dbReference type="InterPro" id="IPR001128">
    <property type="entry name" value="Cyt_P450"/>
</dbReference>
<dbReference type="InterPro" id="IPR017972">
    <property type="entry name" value="Cyt_P450_CS"/>
</dbReference>
<dbReference type="InterPro" id="IPR002401">
    <property type="entry name" value="Cyt_P450_E_grp-I"/>
</dbReference>
<dbReference type="InterPro" id="IPR036396">
    <property type="entry name" value="Cyt_P450_sf"/>
</dbReference>
<dbReference type="InterPro" id="IPR050651">
    <property type="entry name" value="Plant_Cytochrome_P450_Monoox"/>
</dbReference>
<dbReference type="PANTHER" id="PTHR47947">
    <property type="entry name" value="CYTOCHROME P450 82C3-RELATED"/>
    <property type="match status" value="1"/>
</dbReference>
<dbReference type="PANTHER" id="PTHR47947:SF1">
    <property type="entry name" value="CYTOCHROME P450 82E3"/>
    <property type="match status" value="1"/>
</dbReference>
<dbReference type="Pfam" id="PF00067">
    <property type="entry name" value="p450"/>
    <property type="match status" value="2"/>
</dbReference>
<dbReference type="PRINTS" id="PR00463">
    <property type="entry name" value="EP450I"/>
</dbReference>
<dbReference type="PRINTS" id="PR00385">
    <property type="entry name" value="P450"/>
</dbReference>
<dbReference type="SUPFAM" id="SSF48264">
    <property type="entry name" value="Cytochrome P450"/>
    <property type="match status" value="1"/>
</dbReference>
<dbReference type="PROSITE" id="PS00086">
    <property type="entry name" value="CYTOCHROME_P450"/>
    <property type="match status" value="1"/>
</dbReference>
<proteinExistence type="evidence at protein level"/>
<protein>
    <recommendedName>
        <fullName evidence="5 6">Vinorine hydroxylase</fullName>
        <shortName evidence="6">RsVH</shortName>
        <ecNumber evidence="3 4">1.14.14.104</ecNumber>
    </recommendedName>
    <alternativeName>
        <fullName evidence="8">Cytochrome P450 5437</fullName>
        <shortName evidence="8">RsCYP5437</shortName>
    </alternativeName>
    <alternativeName>
        <fullName evidence="5">Cytochrome P450 82S18</fullName>
    </alternativeName>
    <alternativeName>
        <fullName evidence="5">Perakine synthase</fullName>
        <shortName evidence="5">Vomilenine isomerase</shortName>
    </alternativeName>
</protein>
<organism>
    <name type="scientific">Rauvolfia serpentina</name>
    <name type="common">Serpentine wood</name>
    <name type="synonym">Ophioxylon serpentinum</name>
    <dbReference type="NCBI Taxonomy" id="4060"/>
    <lineage>
        <taxon>Eukaryota</taxon>
        <taxon>Viridiplantae</taxon>
        <taxon>Streptophyta</taxon>
        <taxon>Embryophyta</taxon>
        <taxon>Tracheophyta</taxon>
        <taxon>Spermatophyta</taxon>
        <taxon>Magnoliopsida</taxon>
        <taxon>eudicotyledons</taxon>
        <taxon>Gunneridae</taxon>
        <taxon>Pentapetalae</taxon>
        <taxon>asterids</taxon>
        <taxon>lamiids</taxon>
        <taxon>Gentianales</taxon>
        <taxon>Apocynaceae</taxon>
        <taxon>Rauvolfioideae</taxon>
        <taxon>Vinceae</taxon>
        <taxon>Rauvolfiinae</taxon>
        <taxon>Rauvolfia</taxon>
    </lineage>
</organism>
<gene>
    <name evidence="5 6" type="primary">VH</name>
    <name evidence="8" type="synonym">CYP5437</name>
    <name evidence="5" type="synonym">CYP82S18</name>
</gene>
<keyword id="KW-0017">Alkaloid metabolism</keyword>
<keyword id="KW-0349">Heme</keyword>
<keyword id="KW-0408">Iron</keyword>
<keyword id="KW-0413">Isomerase</keyword>
<keyword id="KW-0472">Membrane</keyword>
<keyword id="KW-0479">Metal-binding</keyword>
<keyword id="KW-0503">Monooxygenase</keyword>
<keyword id="KW-0560">Oxidoreductase</keyword>
<keyword id="KW-0812">Transmembrane</keyword>
<keyword id="KW-1133">Transmembrane helix</keyword>
<evidence type="ECO:0000250" key="1">
    <source>
        <dbReference type="UniProtKB" id="P04798"/>
    </source>
</evidence>
<evidence type="ECO:0000255" key="2"/>
<evidence type="ECO:0000269" key="3">
    <source>
    </source>
</evidence>
<evidence type="ECO:0000269" key="4">
    <source>
    </source>
</evidence>
<evidence type="ECO:0000303" key="5">
    <source>
    </source>
</evidence>
<evidence type="ECO:0000303" key="6">
    <source>
    </source>
</evidence>
<evidence type="ECO:0000305" key="7"/>
<evidence type="ECO:0000312" key="8">
    <source>
        <dbReference type="EMBL" id="ASG81458.1"/>
    </source>
</evidence>
<accession>A0A218NGS0</accession>
<sequence length="480" mass="54063">MDLLQILLAIAGLLAILLLQKQWRTKTSPGAKAGRKLPPEPAGAWPVIGHLHKLGGPNPIYRNLAEWSDKYGPVMTLKLGMQNAVVVSDREAIKECFTTNDKALADRPPSSIGLHLGFNYAAIGAAPYGPYWRDMRKLVLLEVLSSRRLEMLRNVRISEIGTSIKELYSNIIRSSGGSGPAKVVISHWIEQLTLNYILRTIAGRRFSDDSSKDAQYVKGVINDFMYFAGQFVVSDVIPIPLLRWLDPQGHLKGMKRVAKEVDTMCEAWIQEHVQRRMREKPGPGQEQDFIDVLLNNRDVMRKAQEEIDNHVGKERWVDETDLKHLVYLQAIVKEGLRLYPPGPLGAPHRAIEDCQVGGYFIPKGTQLLVNVWKLHRDPRVWSEPEKFMPERFLTRQAEVDVFGHHFELLPFGSGRRACPGITFAVQVMHLTVARLLQGFDMTTPSNLPVDMTEGPGVTMPKAHPVEVLMMPRLPSALYEP</sequence>
<name>VINHY_RAUSE</name>
<comment type="function">
    <text evidence="3 4">A cytochrome P450 monooxygenase involved in the biosynthesis of ajmaline-type monoterpenoid indole alkaloids (MIAs) natural products, important plant-derived pharmaceuticals used in the therapy of heart disorders (PubMed:28654178, PubMed:38212296). Catalyzes the hydroxylation of vinorine to vomilenine, an intermediate chemical in the biosynthesis of ajmaline (PubMed:28654178, PubMed:38212296). Supports also vomilenine isomerization to perakine (PubMed:28654178).</text>
</comment>
<comment type="catalytic activity">
    <reaction evidence="3 4">
        <text>vinorine + reduced [NADPH--hemoprotein reductase] + O2 = vomilenine + oxidized [NADPH--hemoprotein reductase] + H2O + H(+)</text>
        <dbReference type="Rhea" id="RHEA:17257"/>
        <dbReference type="Rhea" id="RHEA-COMP:11964"/>
        <dbReference type="Rhea" id="RHEA-COMP:11965"/>
        <dbReference type="ChEBI" id="CHEBI:15377"/>
        <dbReference type="ChEBI" id="CHEBI:15378"/>
        <dbReference type="ChEBI" id="CHEBI:15379"/>
        <dbReference type="ChEBI" id="CHEBI:16408"/>
        <dbReference type="ChEBI" id="CHEBI:16791"/>
        <dbReference type="ChEBI" id="CHEBI:57618"/>
        <dbReference type="ChEBI" id="CHEBI:58210"/>
        <dbReference type="EC" id="1.14.14.104"/>
    </reaction>
    <physiologicalReaction direction="left-to-right" evidence="3 4">
        <dbReference type="Rhea" id="RHEA:17258"/>
    </physiologicalReaction>
</comment>
<comment type="catalytic activity">
    <reaction evidence="3">
        <text>vomilenine = perakine</text>
        <dbReference type="Rhea" id="RHEA:81403"/>
        <dbReference type="ChEBI" id="CHEBI:16408"/>
        <dbReference type="ChEBI" id="CHEBI:63168"/>
    </reaction>
    <physiologicalReaction direction="left-to-right" evidence="3">
        <dbReference type="Rhea" id="RHEA:81404"/>
    </physiologicalReaction>
</comment>
<comment type="cofactor">
    <cofactor evidence="1">
        <name>heme</name>
        <dbReference type="ChEBI" id="CHEBI:30413"/>
    </cofactor>
</comment>
<comment type="biophysicochemical properties">
    <kinetics>
        <KM evidence="3">6.8 uM for vinorine</KM>
        <Vmax evidence="3">98.0 pmol/min/mg enzyme with vinorine as substrate</Vmax>
    </kinetics>
    <phDependence>
        <text evidence="3">Optimum pH is 6.5-8.5 for the hydroxylation of vinorine (PubMed:28654178). Optimum pH is 4.5 for the isomerization of vomilenine to perakine (PubMed:28654178).</text>
    </phDependence>
    <temperatureDependence>
        <text evidence="3">Optimum temperature is 30 degrees Celsius.</text>
    </temperatureDependence>
</comment>
<comment type="pathway">
    <text evidence="3 4">Alkaloid biosynthesis; ajmaline biosynthesis.</text>
</comment>
<comment type="subcellular location">
    <subcellularLocation>
        <location evidence="2">Membrane</location>
        <topology evidence="2">Single-pass membrane protein</topology>
    </subcellularLocation>
</comment>
<comment type="tissue specificity">
    <text evidence="3 4">Mainly expressed in roots and, to a lesser extent, in leaves.</text>
</comment>
<comment type="biotechnology">
    <text evidence="4">The strictosidine aglycone-producing AJM7-DeltaHYS yeast strain expressing pathway genes of the VOM module, RsGS, SBE (GsSBE, RsSBE1 or RsSBE2), RsPNAE, RsVS and RsVH, accumulates vomilenine (PubMed:38212296). Additionnal expression of pathway genes of the AJM module, RsVR, RsDHVR, AAE (RsAAE1 or RsAAE2) and RsNNMT, leads to the production of ajmaline (PubMed:38212296). Ajmaline is an anti-arrhythmic alkaloid commercially used as an efficient drug for the treatment of arrhythmic heart disorder (PubMed:38212296).</text>
</comment>
<comment type="similarity">
    <text evidence="7">Belongs to the cytochrome P450 family.</text>
</comment>
<reference evidence="8" key="1">
    <citation type="journal article" date="2017" name="Angew. Chem. Int. Ed.">
        <title>Dual catalytic activity of a cytochrome P450 controls bifurcation at a metabolic branch point of alkaloid biosynthesis in Rauwolfia serpentina.</title>
        <authorList>
            <person name="Dang T.T."/>
            <person name="Franke J."/>
            <person name="Tatsis E."/>
            <person name="O'Connor S.E."/>
        </authorList>
    </citation>
    <scope>NUCLEOTIDE SEQUENCE [MRNA]</scope>
    <scope>FUNCTION</scope>
    <scope>CATALYTIC ACTIVITY</scope>
    <scope>PATHWAY</scope>
    <scope>BIOPHYSICOCHEMICAL PROPERTIES</scope>
    <scope>TISSUE SPECIFICITY</scope>
</reference>
<reference key="2">
    <citation type="journal article" date="2024" name="Nat. Commun.">
        <title>De novo biosynthesis of antiarrhythmic alkaloid ajmaline.</title>
        <authorList>
            <person name="Guo J."/>
            <person name="Gao D."/>
            <person name="Lian J."/>
            <person name="Qu Y."/>
        </authorList>
    </citation>
    <scope>FUNCTION</scope>
    <scope>CATALYTIC ACTIVITY</scope>
    <scope>PATHWAY</scope>
    <scope>TISSUE SPECIFICITY</scope>
    <scope>BIOTECHNOLOGY</scope>
</reference>
<feature type="chain" id="PRO_0000462313" description="Vinorine hydroxylase">
    <location>
        <begin position="1"/>
        <end position="480"/>
    </location>
</feature>
<feature type="transmembrane region" description="Helical" evidence="2">
    <location>
        <begin position="3"/>
        <end position="23"/>
    </location>
</feature>
<feature type="binding site" description="axial binding residue" evidence="1">
    <location>
        <position position="418"/>
    </location>
    <ligand>
        <name>heme</name>
        <dbReference type="ChEBI" id="CHEBI:30413"/>
    </ligand>
    <ligandPart>
        <name>Fe</name>
        <dbReference type="ChEBI" id="CHEBI:18248"/>
    </ligandPart>
</feature>